<dbReference type="EMBL" id="AB035449">
    <property type="protein sequence ID" value="BAB03329.1"/>
    <property type="molecule type" value="Genomic_DNA"/>
</dbReference>
<dbReference type="EMBL" id="AP009324">
    <property type="protein sequence ID" value="BAF77458.1"/>
    <property type="molecule type" value="Genomic_DNA"/>
</dbReference>
<dbReference type="PIR" id="C89826">
    <property type="entry name" value="C89826"/>
</dbReference>
<dbReference type="RefSeq" id="WP_001165058.1">
    <property type="nucleotide sequence ID" value="NZ_CTYB01000020.1"/>
</dbReference>
<dbReference type="SMR" id="Q9KWK3"/>
<dbReference type="KEGG" id="saw:SAHV_0575"/>
<dbReference type="HOGENOM" id="CLU_2195295_0_0_9"/>
<dbReference type="InterPro" id="IPR016994">
    <property type="entry name" value="UCP032370_VraC"/>
</dbReference>
<dbReference type="PIRSF" id="PIRSF032370">
    <property type="entry name" value="UCP032370_VraC"/>
    <property type="match status" value="1"/>
</dbReference>
<feature type="chain" id="PRO_0000065915" description="Protein VraC">
    <location>
        <begin position="1"/>
        <end position="121"/>
    </location>
</feature>
<comment type="miscellaneous">
    <text>May contribute to vancomycin resistance.</text>
</comment>
<accession>Q9KWK3</accession>
<accession>A7WZ16</accession>
<organism>
    <name type="scientific">Staphylococcus aureus (strain Mu3 / ATCC 700698)</name>
    <dbReference type="NCBI Taxonomy" id="418127"/>
    <lineage>
        <taxon>Bacteria</taxon>
        <taxon>Bacillati</taxon>
        <taxon>Bacillota</taxon>
        <taxon>Bacilli</taxon>
        <taxon>Bacillales</taxon>
        <taxon>Staphylococcaceae</taxon>
        <taxon>Staphylococcus</taxon>
    </lineage>
</organism>
<proteinExistence type="predicted"/>
<gene>
    <name type="primary">vraC</name>
    <name type="ordered locus">SAHV_0575</name>
</gene>
<name>VRAC_STAA1</name>
<reference key="1">
    <citation type="journal article" date="2000" name="Biochem. Biophys. Res. Commun.">
        <title>Identification of the up- and down-regulated genes in vancomycin-resistant Staphylococcus aureus strains Mu3 and Mu50 by cDNA differential hybridization method.</title>
        <authorList>
            <person name="Kuroda M."/>
            <person name="Kuwahara-Arai K."/>
            <person name="Hiramatsu K."/>
        </authorList>
    </citation>
    <scope>NUCLEOTIDE SEQUENCE [GENOMIC DNA]</scope>
    <scope>VANCOMYCIN RESISTANCE</scope>
</reference>
<reference key="2">
    <citation type="journal article" date="2008" name="Antimicrob. Agents Chemother.">
        <title>Mutated response regulator graR is responsible for phenotypic conversion of Staphylococcus aureus from heterogeneous vancomycin-intermediate resistance to vancomycin-intermediate resistance.</title>
        <authorList>
            <person name="Neoh H.-M."/>
            <person name="Cui L."/>
            <person name="Yuzawa H."/>
            <person name="Takeuchi F."/>
            <person name="Matsuo M."/>
            <person name="Hiramatsu K."/>
        </authorList>
    </citation>
    <scope>NUCLEOTIDE SEQUENCE [LARGE SCALE GENOMIC DNA]</scope>
    <source>
        <strain>Mu3 / ATCC 700698</strain>
    </source>
</reference>
<sequence length="121" mass="14187">MQHYLLDSNQRLNVSFSKDSVAAYYQCFNQPYRKEVPPLMCASLWPKFDLFKKYANSELILTKSAINQTQKIEVDTIYVGHLEDIECRQTRNITRYTMALTLTKNDQHVITVTQTFIKAMK</sequence>
<protein>
    <recommendedName>
        <fullName>Protein VraC</fullName>
    </recommendedName>
</protein>